<comment type="subunit">
    <text evidence="1">Part of the 50S ribosomal subunit.</text>
</comment>
<comment type="similarity">
    <text evidence="1">Belongs to the universal ribosomal protein uL30 family.</text>
</comment>
<feature type="chain" id="PRO_1000055997" description="Large ribosomal subunit protein uL30">
    <location>
        <begin position="1"/>
        <end position="60"/>
    </location>
</feature>
<accession>A1TJT5</accession>
<evidence type="ECO:0000255" key="1">
    <source>
        <dbReference type="HAMAP-Rule" id="MF_01371"/>
    </source>
</evidence>
<evidence type="ECO:0000305" key="2"/>
<reference key="1">
    <citation type="submission" date="2006-12" db="EMBL/GenBank/DDBJ databases">
        <title>Complete sequence of Acidovorax avenae subsp. citrulli AAC00-1.</title>
        <authorList>
            <person name="Copeland A."/>
            <person name="Lucas S."/>
            <person name="Lapidus A."/>
            <person name="Barry K."/>
            <person name="Detter J.C."/>
            <person name="Glavina del Rio T."/>
            <person name="Dalin E."/>
            <person name="Tice H."/>
            <person name="Pitluck S."/>
            <person name="Kiss H."/>
            <person name="Brettin T."/>
            <person name="Bruce D."/>
            <person name="Han C."/>
            <person name="Tapia R."/>
            <person name="Gilna P."/>
            <person name="Schmutz J."/>
            <person name="Larimer F."/>
            <person name="Land M."/>
            <person name="Hauser L."/>
            <person name="Kyrpides N."/>
            <person name="Kim E."/>
            <person name="Stahl D."/>
            <person name="Richardson P."/>
        </authorList>
    </citation>
    <scope>NUCLEOTIDE SEQUENCE [LARGE SCALE GENOMIC DNA]</scope>
    <source>
        <strain>AAC00-1</strain>
    </source>
</reference>
<gene>
    <name evidence="1" type="primary">rpmD</name>
    <name type="ordered locus">Aave_0619</name>
</gene>
<keyword id="KW-0687">Ribonucleoprotein</keyword>
<keyword id="KW-0689">Ribosomal protein</keyword>
<organism>
    <name type="scientific">Paracidovorax citrulli (strain AAC00-1)</name>
    <name type="common">Acidovorax citrulli</name>
    <dbReference type="NCBI Taxonomy" id="397945"/>
    <lineage>
        <taxon>Bacteria</taxon>
        <taxon>Pseudomonadati</taxon>
        <taxon>Pseudomonadota</taxon>
        <taxon>Betaproteobacteria</taxon>
        <taxon>Burkholderiales</taxon>
        <taxon>Comamonadaceae</taxon>
        <taxon>Paracidovorax</taxon>
    </lineage>
</organism>
<proteinExistence type="inferred from homology"/>
<sequence length="60" mass="6706">MTTQQTVKIQLVRSPIGTKESHRATVRGLGLRKLNSVSELKDSPEVRGMINKISYLVKVL</sequence>
<protein>
    <recommendedName>
        <fullName evidence="1">Large ribosomal subunit protein uL30</fullName>
    </recommendedName>
    <alternativeName>
        <fullName evidence="2">50S ribosomal protein L30</fullName>
    </alternativeName>
</protein>
<name>RL30_PARC0</name>
<dbReference type="EMBL" id="CP000512">
    <property type="protein sequence ID" value="ABM31223.1"/>
    <property type="molecule type" value="Genomic_DNA"/>
</dbReference>
<dbReference type="RefSeq" id="WP_011793794.1">
    <property type="nucleotide sequence ID" value="NC_008752.1"/>
</dbReference>
<dbReference type="SMR" id="A1TJT5"/>
<dbReference type="STRING" id="397945.Aave_0619"/>
<dbReference type="GeneID" id="79790333"/>
<dbReference type="KEGG" id="aav:Aave_0619"/>
<dbReference type="eggNOG" id="COG1841">
    <property type="taxonomic scope" value="Bacteria"/>
</dbReference>
<dbReference type="HOGENOM" id="CLU_131047_1_4_4"/>
<dbReference type="OrthoDB" id="9812790at2"/>
<dbReference type="Proteomes" id="UP000002596">
    <property type="component" value="Chromosome"/>
</dbReference>
<dbReference type="GO" id="GO:0022625">
    <property type="term" value="C:cytosolic large ribosomal subunit"/>
    <property type="evidence" value="ECO:0007669"/>
    <property type="project" value="TreeGrafter"/>
</dbReference>
<dbReference type="GO" id="GO:0003735">
    <property type="term" value="F:structural constituent of ribosome"/>
    <property type="evidence" value="ECO:0007669"/>
    <property type="project" value="InterPro"/>
</dbReference>
<dbReference type="GO" id="GO:0006412">
    <property type="term" value="P:translation"/>
    <property type="evidence" value="ECO:0007669"/>
    <property type="project" value="UniProtKB-UniRule"/>
</dbReference>
<dbReference type="CDD" id="cd01658">
    <property type="entry name" value="Ribosomal_L30"/>
    <property type="match status" value="1"/>
</dbReference>
<dbReference type="FunFam" id="3.30.1390.20:FF:000001">
    <property type="entry name" value="50S ribosomal protein L30"/>
    <property type="match status" value="1"/>
</dbReference>
<dbReference type="Gene3D" id="3.30.1390.20">
    <property type="entry name" value="Ribosomal protein L30, ferredoxin-like fold domain"/>
    <property type="match status" value="1"/>
</dbReference>
<dbReference type="HAMAP" id="MF_01371_B">
    <property type="entry name" value="Ribosomal_uL30_B"/>
    <property type="match status" value="1"/>
</dbReference>
<dbReference type="InterPro" id="IPR036919">
    <property type="entry name" value="Ribo_uL30_ferredoxin-like_sf"/>
</dbReference>
<dbReference type="InterPro" id="IPR005996">
    <property type="entry name" value="Ribosomal_uL30_bac-type"/>
</dbReference>
<dbReference type="InterPro" id="IPR016082">
    <property type="entry name" value="Ribosomal_uL30_ferredoxin-like"/>
</dbReference>
<dbReference type="NCBIfam" id="TIGR01308">
    <property type="entry name" value="rpmD_bact"/>
    <property type="match status" value="1"/>
</dbReference>
<dbReference type="PANTHER" id="PTHR15892:SF2">
    <property type="entry name" value="LARGE RIBOSOMAL SUBUNIT PROTEIN UL30M"/>
    <property type="match status" value="1"/>
</dbReference>
<dbReference type="PANTHER" id="PTHR15892">
    <property type="entry name" value="MITOCHONDRIAL RIBOSOMAL PROTEIN L30"/>
    <property type="match status" value="1"/>
</dbReference>
<dbReference type="Pfam" id="PF00327">
    <property type="entry name" value="Ribosomal_L30"/>
    <property type="match status" value="1"/>
</dbReference>
<dbReference type="PIRSF" id="PIRSF002211">
    <property type="entry name" value="Ribosomal_L30_bac-type"/>
    <property type="match status" value="1"/>
</dbReference>
<dbReference type="SUPFAM" id="SSF55129">
    <property type="entry name" value="Ribosomal protein L30p/L7e"/>
    <property type="match status" value="1"/>
</dbReference>